<accession>Q6P0F9</accession>
<accession>Q3S5C8</accession>
<proteinExistence type="evidence at transcript level"/>
<dbReference type="EMBL" id="DQ164184">
    <property type="protein sequence ID" value="AAZ94623.1"/>
    <property type="molecule type" value="mRNA"/>
</dbReference>
<dbReference type="EMBL" id="CABZ01008096">
    <property type="status" value="NOT_ANNOTATED_CDS"/>
    <property type="molecule type" value="Genomic_DNA"/>
</dbReference>
<dbReference type="EMBL" id="CU694316">
    <property type="status" value="NOT_ANNOTATED_CDS"/>
    <property type="molecule type" value="Genomic_DNA"/>
</dbReference>
<dbReference type="EMBL" id="BC065636">
    <property type="protein sequence ID" value="AAH65636.1"/>
    <property type="molecule type" value="mRNA"/>
</dbReference>
<dbReference type="RefSeq" id="NP_991207.1">
    <property type="nucleotide sequence ID" value="NM_205644.1"/>
</dbReference>
<dbReference type="FunCoup" id="Q6P0F9">
    <property type="interactions" value="8"/>
</dbReference>
<dbReference type="STRING" id="7955.ENSDARP00000107863"/>
<dbReference type="PaxDb" id="7955-ENSDARP00000107863"/>
<dbReference type="Ensembl" id="ENSDART00000124040">
    <property type="protein sequence ID" value="ENSDARP00000107863"/>
    <property type="gene ID" value="ENSDARG00000091756"/>
</dbReference>
<dbReference type="GeneID" id="402941"/>
<dbReference type="KEGG" id="dre:402941"/>
<dbReference type="AGR" id="ZFIN:ZDB-GENE-040426-1810"/>
<dbReference type="CTD" id="402941"/>
<dbReference type="ZFIN" id="ZDB-GENE-040426-1810">
    <property type="gene designation" value="insm1a"/>
</dbReference>
<dbReference type="eggNOG" id="KOG3993">
    <property type="taxonomic scope" value="Eukaryota"/>
</dbReference>
<dbReference type="HOGENOM" id="CLU_033476_1_0_1"/>
<dbReference type="InParanoid" id="Q6P0F9"/>
<dbReference type="OMA" id="ECHSHLC"/>
<dbReference type="OrthoDB" id="8953942at2759"/>
<dbReference type="PhylomeDB" id="Q6P0F9"/>
<dbReference type="TreeFam" id="TF320538"/>
<dbReference type="PRO" id="PR:Q6P0F9"/>
<dbReference type="Proteomes" id="UP000000437">
    <property type="component" value="Chromosome 20"/>
</dbReference>
<dbReference type="Bgee" id="ENSDARG00000091756">
    <property type="expression patterns" value="Expressed in camera-type eye and 42 other cell types or tissues"/>
</dbReference>
<dbReference type="ExpressionAtlas" id="Q6P0F9">
    <property type="expression patterns" value="baseline and differential"/>
</dbReference>
<dbReference type="GO" id="GO:0005634">
    <property type="term" value="C:nucleus"/>
    <property type="evidence" value="ECO:0000250"/>
    <property type="project" value="UniProtKB"/>
</dbReference>
<dbReference type="GO" id="GO:0017053">
    <property type="term" value="C:transcription repressor complex"/>
    <property type="evidence" value="ECO:0000250"/>
    <property type="project" value="UniProtKB"/>
</dbReference>
<dbReference type="GO" id="GO:0031490">
    <property type="term" value="F:chromatin DNA binding"/>
    <property type="evidence" value="ECO:0000250"/>
    <property type="project" value="UniProtKB"/>
</dbReference>
<dbReference type="GO" id="GO:0003700">
    <property type="term" value="F:DNA-binding transcription factor activity"/>
    <property type="evidence" value="ECO:0000250"/>
    <property type="project" value="UniProtKB"/>
</dbReference>
<dbReference type="GO" id="GO:0000981">
    <property type="term" value="F:DNA-binding transcription factor activity, RNA polymerase II-specific"/>
    <property type="evidence" value="ECO:0000315"/>
    <property type="project" value="ZFIN"/>
</dbReference>
<dbReference type="GO" id="GO:0001227">
    <property type="term" value="F:DNA-binding transcription repressor activity, RNA polymerase II-specific"/>
    <property type="evidence" value="ECO:0000318"/>
    <property type="project" value="GO_Central"/>
</dbReference>
<dbReference type="GO" id="GO:0000978">
    <property type="term" value="F:RNA polymerase II cis-regulatory region sequence-specific DNA binding"/>
    <property type="evidence" value="ECO:0000250"/>
    <property type="project" value="UniProtKB"/>
</dbReference>
<dbReference type="GO" id="GO:0043565">
    <property type="term" value="F:sequence-specific DNA binding"/>
    <property type="evidence" value="ECO:0000353"/>
    <property type="project" value="ZFIN"/>
</dbReference>
<dbReference type="GO" id="GO:0008270">
    <property type="term" value="F:zinc ion binding"/>
    <property type="evidence" value="ECO:0007669"/>
    <property type="project" value="UniProtKB-KW"/>
</dbReference>
<dbReference type="GO" id="GO:0043697">
    <property type="term" value="P:cell dedifferentiation"/>
    <property type="evidence" value="ECO:0000315"/>
    <property type="project" value="ZFIN"/>
</dbReference>
<dbReference type="GO" id="GO:0045892">
    <property type="term" value="P:negative regulation of DNA-templated transcription"/>
    <property type="evidence" value="ECO:0000314"/>
    <property type="project" value="ZFIN"/>
</dbReference>
<dbReference type="GO" id="GO:0000122">
    <property type="term" value="P:negative regulation of transcription by RNA polymerase II"/>
    <property type="evidence" value="ECO:0000314"/>
    <property type="project" value="ZFIN"/>
</dbReference>
<dbReference type="GO" id="GO:0030182">
    <property type="term" value="P:neuron differentiation"/>
    <property type="evidence" value="ECO:0000318"/>
    <property type="project" value="GO_Central"/>
</dbReference>
<dbReference type="GO" id="GO:0003310">
    <property type="term" value="P:pancreatic A cell differentiation"/>
    <property type="evidence" value="ECO:0000250"/>
    <property type="project" value="UniProtKB"/>
</dbReference>
<dbReference type="GO" id="GO:0035677">
    <property type="term" value="P:posterior lateral line neuromast hair cell development"/>
    <property type="evidence" value="ECO:0000315"/>
    <property type="project" value="ZFIN"/>
</dbReference>
<dbReference type="GO" id="GO:0048920">
    <property type="term" value="P:posterior lateral line neuromast primordium migration"/>
    <property type="evidence" value="ECO:0000315"/>
    <property type="project" value="ZFIN"/>
</dbReference>
<dbReference type="GO" id="GO:0010564">
    <property type="term" value="P:regulation of cell cycle process"/>
    <property type="evidence" value="ECO:0000315"/>
    <property type="project" value="ZFIN"/>
</dbReference>
<dbReference type="GO" id="GO:0042670">
    <property type="term" value="P:retinal cone cell differentiation"/>
    <property type="evidence" value="ECO:0000315"/>
    <property type="project" value="ZFIN"/>
</dbReference>
<dbReference type="GO" id="GO:0060221">
    <property type="term" value="P:retinal rod cell differentiation"/>
    <property type="evidence" value="ECO:0000315"/>
    <property type="project" value="ZFIN"/>
</dbReference>
<dbReference type="GO" id="GO:0070654">
    <property type="term" value="P:sensory epithelium regeneration"/>
    <property type="evidence" value="ECO:0000316"/>
    <property type="project" value="ZFIN"/>
</dbReference>
<dbReference type="GO" id="GO:0021522">
    <property type="term" value="P:spinal cord motor neuron differentiation"/>
    <property type="evidence" value="ECO:0000315"/>
    <property type="project" value="ZFIN"/>
</dbReference>
<dbReference type="GO" id="GO:0042246">
    <property type="term" value="P:tissue regeneration"/>
    <property type="evidence" value="ECO:0000314"/>
    <property type="project" value="ZFIN"/>
</dbReference>
<dbReference type="GO" id="GO:0060290">
    <property type="term" value="P:transdifferentiation"/>
    <property type="evidence" value="ECO:0000250"/>
    <property type="project" value="UniProtKB"/>
</dbReference>
<dbReference type="GO" id="GO:0003309">
    <property type="term" value="P:type B pancreatic cell differentiation"/>
    <property type="evidence" value="ECO:0000250"/>
    <property type="project" value="UniProtKB"/>
</dbReference>
<dbReference type="FunFam" id="3.30.160.60:FF:001458">
    <property type="entry name" value="INSM transcriptional repressor 1"/>
    <property type="match status" value="1"/>
</dbReference>
<dbReference type="FunFam" id="3.30.160.60:FF:000488">
    <property type="entry name" value="Insulinoma-associated protein 2"/>
    <property type="match status" value="1"/>
</dbReference>
<dbReference type="Gene3D" id="3.30.160.60">
    <property type="entry name" value="Classic Zinc Finger"/>
    <property type="match status" value="3"/>
</dbReference>
<dbReference type="InterPro" id="IPR042972">
    <property type="entry name" value="INSM1/2"/>
</dbReference>
<dbReference type="InterPro" id="IPR036236">
    <property type="entry name" value="Znf_C2H2_sf"/>
</dbReference>
<dbReference type="InterPro" id="IPR013087">
    <property type="entry name" value="Znf_C2H2_type"/>
</dbReference>
<dbReference type="PANTHER" id="PTHR15065">
    <property type="entry name" value="INSULINOMA-ASSOCIATED 1"/>
    <property type="match status" value="1"/>
</dbReference>
<dbReference type="PANTHER" id="PTHR15065:SF5">
    <property type="entry name" value="INSULINOMA-ASSOCIATED PROTEIN 1"/>
    <property type="match status" value="1"/>
</dbReference>
<dbReference type="Pfam" id="PF00096">
    <property type="entry name" value="zf-C2H2"/>
    <property type="match status" value="3"/>
</dbReference>
<dbReference type="SMART" id="SM00355">
    <property type="entry name" value="ZnF_C2H2"/>
    <property type="match status" value="5"/>
</dbReference>
<dbReference type="SUPFAM" id="SSF57667">
    <property type="entry name" value="beta-beta-alpha zinc fingers"/>
    <property type="match status" value="3"/>
</dbReference>
<dbReference type="PROSITE" id="PS00028">
    <property type="entry name" value="ZINC_FINGER_C2H2_1"/>
    <property type="match status" value="4"/>
</dbReference>
<dbReference type="PROSITE" id="PS50157">
    <property type="entry name" value="ZINC_FINGER_C2H2_2"/>
    <property type="match status" value="4"/>
</dbReference>
<reference key="1">
    <citation type="journal article" date="2006" name="Gene Expr. Patterns">
        <title>Expression of two insm1-like genes in the developing zebrafish nervous system.</title>
        <authorList>
            <person name="Lukowski C.M."/>
            <person name="Ritzel R.G."/>
            <person name="Waskiewicz A.J."/>
        </authorList>
    </citation>
    <scope>NUCLEOTIDE SEQUENCE [MRNA]</scope>
    <scope>DEVELOPMENTAL STAGE</scope>
    <source>
        <strain>AB</strain>
    </source>
</reference>
<reference key="2">
    <citation type="journal article" date="2013" name="Nature">
        <title>The zebrafish reference genome sequence and its relationship to the human genome.</title>
        <authorList>
            <person name="Howe K."/>
            <person name="Clark M.D."/>
            <person name="Torroja C.F."/>
            <person name="Torrance J."/>
            <person name="Berthelot C."/>
            <person name="Muffato M."/>
            <person name="Collins J.E."/>
            <person name="Humphray S."/>
            <person name="McLaren K."/>
            <person name="Matthews L."/>
            <person name="McLaren S."/>
            <person name="Sealy I."/>
            <person name="Caccamo M."/>
            <person name="Churcher C."/>
            <person name="Scott C."/>
            <person name="Barrett J.C."/>
            <person name="Koch R."/>
            <person name="Rauch G.J."/>
            <person name="White S."/>
            <person name="Chow W."/>
            <person name="Kilian B."/>
            <person name="Quintais L.T."/>
            <person name="Guerra-Assuncao J.A."/>
            <person name="Zhou Y."/>
            <person name="Gu Y."/>
            <person name="Yen J."/>
            <person name="Vogel J.H."/>
            <person name="Eyre T."/>
            <person name="Redmond S."/>
            <person name="Banerjee R."/>
            <person name="Chi J."/>
            <person name="Fu B."/>
            <person name="Langley E."/>
            <person name="Maguire S.F."/>
            <person name="Laird G.K."/>
            <person name="Lloyd D."/>
            <person name="Kenyon E."/>
            <person name="Donaldson S."/>
            <person name="Sehra H."/>
            <person name="Almeida-King J."/>
            <person name="Loveland J."/>
            <person name="Trevanion S."/>
            <person name="Jones M."/>
            <person name="Quail M."/>
            <person name="Willey D."/>
            <person name="Hunt A."/>
            <person name="Burton J."/>
            <person name="Sims S."/>
            <person name="McLay K."/>
            <person name="Plumb B."/>
            <person name="Davis J."/>
            <person name="Clee C."/>
            <person name="Oliver K."/>
            <person name="Clark R."/>
            <person name="Riddle C."/>
            <person name="Elliot D."/>
            <person name="Threadgold G."/>
            <person name="Harden G."/>
            <person name="Ware D."/>
            <person name="Begum S."/>
            <person name="Mortimore B."/>
            <person name="Kerry G."/>
            <person name="Heath P."/>
            <person name="Phillimore B."/>
            <person name="Tracey A."/>
            <person name="Corby N."/>
            <person name="Dunn M."/>
            <person name="Johnson C."/>
            <person name="Wood J."/>
            <person name="Clark S."/>
            <person name="Pelan S."/>
            <person name="Griffiths G."/>
            <person name="Smith M."/>
            <person name="Glithero R."/>
            <person name="Howden P."/>
            <person name="Barker N."/>
            <person name="Lloyd C."/>
            <person name="Stevens C."/>
            <person name="Harley J."/>
            <person name="Holt K."/>
            <person name="Panagiotidis G."/>
            <person name="Lovell J."/>
            <person name="Beasley H."/>
            <person name="Henderson C."/>
            <person name="Gordon D."/>
            <person name="Auger K."/>
            <person name="Wright D."/>
            <person name="Collins J."/>
            <person name="Raisen C."/>
            <person name="Dyer L."/>
            <person name="Leung K."/>
            <person name="Robertson L."/>
            <person name="Ambridge K."/>
            <person name="Leongamornlert D."/>
            <person name="McGuire S."/>
            <person name="Gilderthorp R."/>
            <person name="Griffiths C."/>
            <person name="Manthravadi D."/>
            <person name="Nichol S."/>
            <person name="Barker G."/>
            <person name="Whitehead S."/>
            <person name="Kay M."/>
            <person name="Brown J."/>
            <person name="Murnane C."/>
            <person name="Gray E."/>
            <person name="Humphries M."/>
            <person name="Sycamore N."/>
            <person name="Barker D."/>
            <person name="Saunders D."/>
            <person name="Wallis J."/>
            <person name="Babbage A."/>
            <person name="Hammond S."/>
            <person name="Mashreghi-Mohammadi M."/>
            <person name="Barr L."/>
            <person name="Martin S."/>
            <person name="Wray P."/>
            <person name="Ellington A."/>
            <person name="Matthews N."/>
            <person name="Ellwood M."/>
            <person name="Woodmansey R."/>
            <person name="Clark G."/>
            <person name="Cooper J."/>
            <person name="Tromans A."/>
            <person name="Grafham D."/>
            <person name="Skuce C."/>
            <person name="Pandian R."/>
            <person name="Andrews R."/>
            <person name="Harrison E."/>
            <person name="Kimberley A."/>
            <person name="Garnett J."/>
            <person name="Fosker N."/>
            <person name="Hall R."/>
            <person name="Garner P."/>
            <person name="Kelly D."/>
            <person name="Bird C."/>
            <person name="Palmer S."/>
            <person name="Gehring I."/>
            <person name="Berger A."/>
            <person name="Dooley C.M."/>
            <person name="Ersan-Urun Z."/>
            <person name="Eser C."/>
            <person name="Geiger H."/>
            <person name="Geisler M."/>
            <person name="Karotki L."/>
            <person name="Kirn A."/>
            <person name="Konantz J."/>
            <person name="Konantz M."/>
            <person name="Oberlander M."/>
            <person name="Rudolph-Geiger S."/>
            <person name="Teucke M."/>
            <person name="Lanz C."/>
            <person name="Raddatz G."/>
            <person name="Osoegawa K."/>
            <person name="Zhu B."/>
            <person name="Rapp A."/>
            <person name="Widaa S."/>
            <person name="Langford C."/>
            <person name="Yang F."/>
            <person name="Schuster S.C."/>
            <person name="Carter N.P."/>
            <person name="Harrow J."/>
            <person name="Ning Z."/>
            <person name="Herrero J."/>
            <person name="Searle S.M."/>
            <person name="Enright A."/>
            <person name="Geisler R."/>
            <person name="Plasterk R.H."/>
            <person name="Lee C."/>
            <person name="Westerfield M."/>
            <person name="de Jong P.J."/>
            <person name="Zon L.I."/>
            <person name="Postlethwait J.H."/>
            <person name="Nusslein-Volhard C."/>
            <person name="Hubbard T.J."/>
            <person name="Roest Crollius H."/>
            <person name="Rogers J."/>
            <person name="Stemple D.L."/>
        </authorList>
    </citation>
    <scope>NUCLEOTIDE SEQUENCE [LARGE SCALE GENOMIC DNA]</scope>
    <source>
        <strain>Tuebingen</strain>
    </source>
</reference>
<reference key="3">
    <citation type="submission" date="2004-01" db="EMBL/GenBank/DDBJ databases">
        <authorList>
            <consortium name="NIH - Zebrafish Gene Collection (ZGC) project"/>
        </authorList>
    </citation>
    <scope>NUCLEOTIDE SEQUENCE [LARGE SCALE MRNA]</scope>
    <source>
        <tissue>Embryo</tissue>
    </source>
</reference>
<comment type="function">
    <text evidence="1">May act as a transcriptional regulator. May play a role in neurogenesis and neuroendocrine cell differentiation during embryonic development (By similarity).</text>
</comment>
<comment type="subcellular location">
    <subcellularLocation>
        <location evidence="2">Nucleus</location>
    </subcellularLocation>
</comment>
<comment type="developmental stage">
    <text evidence="5">Expressed both maternally and zygotically. Expressed at 10 hours post-fertilization (hpf), reach peak levels at 48 hpf and is not detectable in adult tissues. Expressed during neurogenesis between 9 and 72 hpf and in ventral endoderm region where pancreatic progenitors originate.</text>
</comment>
<comment type="similarity">
    <text evidence="6">Belongs to the INSM1 family.</text>
</comment>
<name>INS1A_DANRE</name>
<protein>
    <recommendedName>
        <fullName>Insulinoma-associated protein 1a</fullName>
    </recommendedName>
    <alternativeName>
        <fullName>Insulinoma-associated 1-like protein a</fullName>
    </alternativeName>
    <alternativeName>
        <fullName>Zinc finger protein IA-1a</fullName>
    </alternativeName>
</protein>
<feature type="chain" id="PRO_0000425454" description="Insulinoma-associated protein 1a">
    <location>
        <begin position="1"/>
        <end position="383"/>
    </location>
</feature>
<feature type="zinc finger region" description="C2H2-type 1" evidence="3">
    <location>
        <begin position="209"/>
        <end position="231"/>
    </location>
</feature>
<feature type="zinc finger region" description="C2H2-type 2; degenerate" evidence="3">
    <location>
        <begin position="271"/>
        <end position="295"/>
    </location>
</feature>
<feature type="zinc finger region" description="C2H2-type 3" evidence="3">
    <location>
        <begin position="314"/>
        <end position="337"/>
    </location>
</feature>
<feature type="zinc finger region" description="C2H2-type 4" evidence="3">
    <location>
        <begin position="342"/>
        <end position="365"/>
    </location>
</feature>
<feature type="region of interest" description="SNAG domain" evidence="2">
    <location>
        <begin position="1"/>
        <end position="20"/>
    </location>
</feature>
<feature type="region of interest" description="Disordered" evidence="4">
    <location>
        <begin position="99"/>
        <end position="141"/>
    </location>
</feature>
<feature type="region of interest" description="Disordered" evidence="4">
    <location>
        <begin position="229"/>
        <end position="269"/>
    </location>
</feature>
<feature type="compositionally biased region" description="Polar residues" evidence="4">
    <location>
        <begin position="105"/>
        <end position="120"/>
    </location>
</feature>
<feature type="compositionally biased region" description="Basic residues" evidence="4">
    <location>
        <begin position="130"/>
        <end position="140"/>
    </location>
</feature>
<feature type="compositionally biased region" description="Basic and acidic residues" evidence="4">
    <location>
        <begin position="244"/>
        <end position="256"/>
    </location>
</feature>
<feature type="sequence conflict" description="In Ref. 1; AAZ94623." evidence="6" ref="1">
    <original>L</original>
    <variation>P</variation>
    <location>
        <position position="178"/>
    </location>
</feature>
<sequence length="383" mass="42875">MPRGFLVKRNKKATPVSYRVRSEEDEQGAFVAQDVPCARRPVSPVQFGNPETVYRAMYSPTRPVSREHERACLERRFNLGSPISAESFPAAPNCSDQAPVDLKIGTSNSNRTGTTVTTKRPASDTERKGKPASKKAKAMRKLQFEDEMTTSPVLGLKIKEGPVEQKPRSQCASGDKPLGEFVCQLCREAYADPFSLAQHKCSRIVRIEYRCPECDKLFSCPANLASHRRWHKPKQSAESNKTPAPEKEETSSDRDTPSPGLSESGSEDGLYDCQHCGKKFKRQAYLKKHVTAHHDAPEKPQSHAPLNLSASECHLCPVCGENFPSRMSQERHIRLQHSAQVYPCKYCPAMFYSSPGLTRHINKCHPSENRQVILLQMPVRPAC</sequence>
<gene>
    <name type="primary">insm1a</name>
</gene>
<keyword id="KW-0217">Developmental protein</keyword>
<keyword id="KW-0221">Differentiation</keyword>
<keyword id="KW-0238">DNA-binding</keyword>
<keyword id="KW-0479">Metal-binding</keyword>
<keyword id="KW-0524">Neurogenesis</keyword>
<keyword id="KW-0539">Nucleus</keyword>
<keyword id="KW-1185">Reference proteome</keyword>
<keyword id="KW-0677">Repeat</keyword>
<keyword id="KW-0804">Transcription</keyword>
<keyword id="KW-0805">Transcription regulation</keyword>
<keyword id="KW-0862">Zinc</keyword>
<keyword id="KW-0863">Zinc-finger</keyword>
<evidence type="ECO:0000250" key="1"/>
<evidence type="ECO:0000250" key="2">
    <source>
        <dbReference type="UniProtKB" id="Q63ZV0"/>
    </source>
</evidence>
<evidence type="ECO:0000255" key="3">
    <source>
        <dbReference type="PROSITE-ProRule" id="PRU00042"/>
    </source>
</evidence>
<evidence type="ECO:0000256" key="4">
    <source>
        <dbReference type="SAM" id="MobiDB-lite"/>
    </source>
</evidence>
<evidence type="ECO:0000269" key="5">
    <source>
    </source>
</evidence>
<evidence type="ECO:0000305" key="6"/>
<organism>
    <name type="scientific">Danio rerio</name>
    <name type="common">Zebrafish</name>
    <name type="synonym">Brachydanio rerio</name>
    <dbReference type="NCBI Taxonomy" id="7955"/>
    <lineage>
        <taxon>Eukaryota</taxon>
        <taxon>Metazoa</taxon>
        <taxon>Chordata</taxon>
        <taxon>Craniata</taxon>
        <taxon>Vertebrata</taxon>
        <taxon>Euteleostomi</taxon>
        <taxon>Actinopterygii</taxon>
        <taxon>Neopterygii</taxon>
        <taxon>Teleostei</taxon>
        <taxon>Ostariophysi</taxon>
        <taxon>Cypriniformes</taxon>
        <taxon>Danionidae</taxon>
        <taxon>Danioninae</taxon>
        <taxon>Danio</taxon>
    </lineage>
</organism>